<evidence type="ECO:0000256" key="1">
    <source>
        <dbReference type="SAM" id="MobiDB-lite"/>
    </source>
</evidence>
<evidence type="ECO:0000269" key="2">
    <source>
    </source>
</evidence>
<evidence type="ECO:0000269" key="3">
    <source>
    </source>
</evidence>
<evidence type="ECO:0000303" key="4">
    <source>
    </source>
</evidence>
<evidence type="ECO:0000305" key="5"/>
<organism>
    <name type="scientific">Human cytomegalovirus (strain Merlin)</name>
    <name type="common">HHV-5</name>
    <name type="synonym">Human herpesvirus 5</name>
    <dbReference type="NCBI Taxonomy" id="295027"/>
    <lineage>
        <taxon>Viruses</taxon>
        <taxon>Duplodnaviria</taxon>
        <taxon>Heunggongvirae</taxon>
        <taxon>Peploviricota</taxon>
        <taxon>Herviviricetes</taxon>
        <taxon>Herpesvirales</taxon>
        <taxon>Orthoherpesviridae</taxon>
        <taxon>Betaherpesvirinae</taxon>
        <taxon>Cytomegalovirus</taxon>
        <taxon>Cytomegalovirus humanbeta5</taxon>
        <taxon>Human cytomegalovirus</taxon>
    </lineage>
</organism>
<keyword id="KW-1185">Reference proteome</keyword>
<name>IR01_HCMVM</name>
<gene>
    <name type="primary">RL1</name>
</gene>
<organismHost>
    <name type="scientific">Homo sapiens</name>
    <name type="common">Human</name>
    <dbReference type="NCBI Taxonomy" id="9606"/>
</organismHost>
<protein>
    <recommendedName>
        <fullName evidence="4">Protein RL1</fullName>
        <shortName>IRL1</shortName>
        <shortName>TRL1</shortName>
    </recommendedName>
    <alternativeName>
        <fullName>Protein HKLF1</fullName>
    </alternativeName>
</protein>
<accession>Q6SWD5</accession>
<accession>D2K3G5</accession>
<sequence length="310" mass="34733">MPATDTNSTHTTPLHPEDQHTLPLHHSTTQPHVQTSDKHADKQHRTQMELDAADYAACAQARQHLYGQTQPQLHAYPNANPQESAHFRTENQHQLTNLLHNIGEGAALGYPVPRAEIRRGGGDWADSASDFDADCWCMWGRFGTMGRQPVVTLLLARQRDGLADWNVVRCRGTGFRAHDSEDGVSVWRQHLVFLLGGHGRRVQLERPSAGEAQARGLLPRIRITPISTSPRPKPPQPTTSTASHPHATARPDHTLFPVPSTPSATVHNPRNYAVQLHAETTRTWRWARRGERGAWMPAETFTCPKDKRPW</sequence>
<feature type="chain" id="PRO_0000418234" description="Protein RL1">
    <location>
        <begin position="1"/>
        <end position="310"/>
    </location>
</feature>
<feature type="region of interest" description="Disordered" evidence="1">
    <location>
        <begin position="1"/>
        <end position="44"/>
    </location>
</feature>
<feature type="region of interest" description="Involved in the interaction with host DDB1" evidence="3">
    <location>
        <begin position="153"/>
        <end position="159"/>
    </location>
</feature>
<feature type="region of interest" description="Disordered" evidence="1">
    <location>
        <begin position="205"/>
        <end position="252"/>
    </location>
</feature>
<feature type="compositionally biased region" description="Polar residues" evidence="1">
    <location>
        <begin position="1"/>
        <end position="12"/>
    </location>
</feature>
<feature type="compositionally biased region" description="Basic and acidic residues" evidence="1">
    <location>
        <begin position="35"/>
        <end position="44"/>
    </location>
</feature>
<feature type="compositionally biased region" description="Low complexity" evidence="1">
    <location>
        <begin position="238"/>
        <end position="248"/>
    </location>
</feature>
<feature type="mutagenesis site" description="No effect on the interaction with host DDB1." evidence="3">
    <original>P</original>
    <variation>A</variation>
    <location>
        <position position="149"/>
    </location>
</feature>
<feature type="mutagenesis site" description="No effect on the interaction with host DDB1." evidence="3">
    <original>T</original>
    <variation>A</variation>
    <location>
        <position position="152"/>
    </location>
</feature>
<feature type="mutagenesis site" description="Almost complete loss of interaction with host DDB1." evidence="3">
    <original>LL</original>
    <variation>AA</variation>
    <location>
        <begin position="153"/>
        <end position="154"/>
    </location>
</feature>
<feature type="mutagenesis site" description="Almost complete loss of interaction with host DDB1." evidence="3">
    <original>R</original>
    <variation>A</variation>
    <location>
        <position position="157"/>
    </location>
</feature>
<feature type="mutagenesis site" description="Almost complete loss of interaction with host DDB1." evidence="3">
    <original>R</original>
    <variation>A</variation>
    <location>
        <position position="159"/>
    </location>
</feature>
<proteinExistence type="evidence at protein level"/>
<dbReference type="EMBL" id="AY446894">
    <property type="protein sequence ID" value="AAR31561.1"/>
    <property type="molecule type" value="Genomic_DNA"/>
</dbReference>
<dbReference type="RefSeq" id="YP_081455.1">
    <property type="nucleotide sequence ID" value="NC_006273.2"/>
</dbReference>
<dbReference type="DNASU" id="3077430"/>
<dbReference type="GeneID" id="3077430"/>
<dbReference type="KEGG" id="vg:3077430"/>
<dbReference type="Reactome" id="R-HSA-9609690">
    <property type="pathway name" value="HCMV Early Events"/>
</dbReference>
<dbReference type="Proteomes" id="UP000000938">
    <property type="component" value="Segment"/>
</dbReference>
<dbReference type="InterPro" id="IPR016394">
    <property type="entry name" value="HHV5_RL1"/>
</dbReference>
<dbReference type="PIRSF" id="PIRSF003440">
    <property type="entry name" value="UCP003440"/>
    <property type="match status" value="1"/>
</dbReference>
<reference key="1">
    <citation type="journal article" date="2004" name="J. Gen. Virol.">
        <title>Genetic content of wild-type human cytomegalovirus.</title>
        <authorList>
            <person name="Dolan A."/>
            <person name="Cunningham C."/>
            <person name="Hector R.D."/>
            <person name="Hassan-Walker A.F."/>
            <person name="Lee L."/>
            <person name="Addison C."/>
            <person name="Dargan D.J."/>
            <person name="McGeoch D.J."/>
            <person name="Gatherer D."/>
            <person name="Emery V.C."/>
            <person name="Griffiths P.D."/>
            <person name="Sinzger C."/>
            <person name="McSharry B.P."/>
            <person name="Wilkinson G.W.G."/>
            <person name="Davison A.J."/>
        </authorList>
    </citation>
    <scope>NUCLEOTIDE SEQUENCE [LARGE SCALE GENOMIC DNA]</scope>
</reference>
<reference key="2">
    <citation type="journal article" date="2022" name="Proc. Natl. Acad. Sci. U.S.A.">
        <title>Human cytomegalovirus protein RL1 degrades the antiviral factor SLFN11 via recruitment of the CRL4 E3 ubiquitin ligase complex.</title>
        <authorList>
            <person name="Nightingale K."/>
            <person name="Potts M."/>
            <person name="Hunter L.M."/>
            <person name="Fielding C.A."/>
            <person name="Zerbe C.M."/>
            <person name="Fletcher-Etherington A."/>
            <person name="Nobre L."/>
            <person name="Wang E.C.Y."/>
            <person name="Strang B.L."/>
            <person name="Houghton J.W."/>
            <person name="Antrobus R."/>
            <person name="Suarez N.M."/>
            <person name="Nichols J."/>
            <person name="Davison A.J."/>
            <person name="Stanton R.J."/>
            <person name="Weekes M.P."/>
        </authorList>
    </citation>
    <scope>FUNCTION</scope>
    <scope>INTERACTION WITH HOST DDB1</scope>
    <scope>MUTAGENESIS OF PRO-149; THR-152; 153-LEU-LEU-154; ARG-157 AND ARG-159</scope>
</reference>
<comment type="function">
    <text evidence="2">Degrades the host antiviral factor SLFN11 via the cullin4-RING E3 ubiquitin ligase (CRL4) complex.</text>
</comment>
<comment type="subunit">
    <text evidence="3">Interacts with host adaptor protein DDB1; this interaction allows RL1 to recruit the cullin4-RING E3 ubiquitin ligase (CRL4) complex and promote SLN11 degradation.</text>
</comment>
<comment type="similarity">
    <text evidence="5">Belongs to the HHV-5 HKLF1 family.</text>
</comment>